<organism>
    <name type="scientific">Mycoplasma mycoides subsp. mycoides SC (strain CCUG 32753 / NCTC 10114 / PG1)</name>
    <dbReference type="NCBI Taxonomy" id="272632"/>
    <lineage>
        <taxon>Bacteria</taxon>
        <taxon>Bacillati</taxon>
        <taxon>Mycoplasmatota</taxon>
        <taxon>Mollicutes</taxon>
        <taxon>Mycoplasmataceae</taxon>
        <taxon>Mycoplasma</taxon>
    </lineage>
</organism>
<proteinExistence type="inferred from homology"/>
<accession>Q6MSN2</accession>
<reference key="1">
    <citation type="journal article" date="2004" name="Genome Res.">
        <title>The genome sequence of Mycoplasma mycoides subsp. mycoides SC type strain PG1T, the causative agent of contagious bovine pleuropneumonia (CBPP).</title>
        <authorList>
            <person name="Westberg J."/>
            <person name="Persson A."/>
            <person name="Holmberg A."/>
            <person name="Goesmann A."/>
            <person name="Lundeberg J."/>
            <person name="Johansson K.-E."/>
            <person name="Pettersson B."/>
            <person name="Uhlen M."/>
        </authorList>
    </citation>
    <scope>NUCLEOTIDE SEQUENCE [LARGE SCALE GENOMIC DNA]</scope>
    <source>
        <strain>CCUG 32753 / NCTC 10114 / PG1</strain>
    </source>
</reference>
<sequence>MLQPKRTKYRKPHRVSYEGKAKGVKEINFGEFGLMALDGAWIDNHQIEAARIAMTRYMKRDGKIWMRIFPHMAMTKKPAEVRMGSGKGNPEKWVAVVKKGTIMFEVAQVNEQVAREALRLAMHKLPIRCKFVKRGEN</sequence>
<name>RL16_MYCMS</name>
<protein>
    <recommendedName>
        <fullName evidence="1">Large ribosomal subunit protein uL16</fullName>
    </recommendedName>
    <alternativeName>
        <fullName evidence="2">50S ribosomal protein L16</fullName>
    </alternativeName>
</protein>
<dbReference type="EMBL" id="BX293980">
    <property type="protein sequence ID" value="CAE77356.1"/>
    <property type="molecule type" value="Genomic_DNA"/>
</dbReference>
<dbReference type="RefSeq" id="NP_975714.1">
    <property type="nucleotide sequence ID" value="NC_005364.2"/>
</dbReference>
<dbReference type="RefSeq" id="WP_011166906.1">
    <property type="nucleotide sequence ID" value="NC_005364.2"/>
</dbReference>
<dbReference type="SMR" id="Q6MSN2"/>
<dbReference type="STRING" id="272632.MSC_0738"/>
<dbReference type="KEGG" id="mmy:MSC_0738"/>
<dbReference type="PATRIC" id="fig|272632.4.peg.795"/>
<dbReference type="eggNOG" id="COG0197">
    <property type="taxonomic scope" value="Bacteria"/>
</dbReference>
<dbReference type="HOGENOM" id="CLU_078858_2_1_14"/>
<dbReference type="Proteomes" id="UP000001016">
    <property type="component" value="Chromosome"/>
</dbReference>
<dbReference type="GO" id="GO:0022625">
    <property type="term" value="C:cytosolic large ribosomal subunit"/>
    <property type="evidence" value="ECO:0007669"/>
    <property type="project" value="TreeGrafter"/>
</dbReference>
<dbReference type="GO" id="GO:0019843">
    <property type="term" value="F:rRNA binding"/>
    <property type="evidence" value="ECO:0007669"/>
    <property type="project" value="UniProtKB-UniRule"/>
</dbReference>
<dbReference type="GO" id="GO:0003735">
    <property type="term" value="F:structural constituent of ribosome"/>
    <property type="evidence" value="ECO:0007669"/>
    <property type="project" value="InterPro"/>
</dbReference>
<dbReference type="GO" id="GO:0000049">
    <property type="term" value="F:tRNA binding"/>
    <property type="evidence" value="ECO:0007669"/>
    <property type="project" value="UniProtKB-KW"/>
</dbReference>
<dbReference type="GO" id="GO:0006412">
    <property type="term" value="P:translation"/>
    <property type="evidence" value="ECO:0007669"/>
    <property type="project" value="UniProtKB-UniRule"/>
</dbReference>
<dbReference type="CDD" id="cd01433">
    <property type="entry name" value="Ribosomal_L16_L10e"/>
    <property type="match status" value="1"/>
</dbReference>
<dbReference type="FunFam" id="3.90.1170.10:FF:000001">
    <property type="entry name" value="50S ribosomal protein L16"/>
    <property type="match status" value="1"/>
</dbReference>
<dbReference type="Gene3D" id="3.90.1170.10">
    <property type="entry name" value="Ribosomal protein L10e/L16"/>
    <property type="match status" value="1"/>
</dbReference>
<dbReference type="HAMAP" id="MF_01342">
    <property type="entry name" value="Ribosomal_uL16"/>
    <property type="match status" value="1"/>
</dbReference>
<dbReference type="InterPro" id="IPR047873">
    <property type="entry name" value="Ribosomal_uL16"/>
</dbReference>
<dbReference type="InterPro" id="IPR000114">
    <property type="entry name" value="Ribosomal_uL16_bact-type"/>
</dbReference>
<dbReference type="InterPro" id="IPR020798">
    <property type="entry name" value="Ribosomal_uL16_CS"/>
</dbReference>
<dbReference type="InterPro" id="IPR016180">
    <property type="entry name" value="Ribosomal_uL16_dom"/>
</dbReference>
<dbReference type="InterPro" id="IPR036920">
    <property type="entry name" value="Ribosomal_uL16_sf"/>
</dbReference>
<dbReference type="NCBIfam" id="TIGR01164">
    <property type="entry name" value="rplP_bact"/>
    <property type="match status" value="1"/>
</dbReference>
<dbReference type="PANTHER" id="PTHR12220">
    <property type="entry name" value="50S/60S RIBOSOMAL PROTEIN L16"/>
    <property type="match status" value="1"/>
</dbReference>
<dbReference type="PANTHER" id="PTHR12220:SF13">
    <property type="entry name" value="LARGE RIBOSOMAL SUBUNIT PROTEIN UL16M"/>
    <property type="match status" value="1"/>
</dbReference>
<dbReference type="Pfam" id="PF00252">
    <property type="entry name" value="Ribosomal_L16"/>
    <property type="match status" value="1"/>
</dbReference>
<dbReference type="PRINTS" id="PR00060">
    <property type="entry name" value="RIBOSOMALL16"/>
</dbReference>
<dbReference type="SUPFAM" id="SSF54686">
    <property type="entry name" value="Ribosomal protein L16p/L10e"/>
    <property type="match status" value="1"/>
</dbReference>
<dbReference type="PROSITE" id="PS00586">
    <property type="entry name" value="RIBOSOMAL_L16_1"/>
    <property type="match status" value="1"/>
</dbReference>
<dbReference type="PROSITE" id="PS00701">
    <property type="entry name" value="RIBOSOMAL_L16_2"/>
    <property type="match status" value="1"/>
</dbReference>
<keyword id="KW-1185">Reference proteome</keyword>
<keyword id="KW-0687">Ribonucleoprotein</keyword>
<keyword id="KW-0689">Ribosomal protein</keyword>
<keyword id="KW-0694">RNA-binding</keyword>
<keyword id="KW-0699">rRNA-binding</keyword>
<keyword id="KW-0820">tRNA-binding</keyword>
<comment type="function">
    <text evidence="1">Binds 23S rRNA and is also seen to make contacts with the A and possibly P site tRNAs.</text>
</comment>
<comment type="subunit">
    <text evidence="1">Part of the 50S ribosomal subunit.</text>
</comment>
<comment type="similarity">
    <text evidence="1">Belongs to the universal ribosomal protein uL16 family.</text>
</comment>
<evidence type="ECO:0000255" key="1">
    <source>
        <dbReference type="HAMAP-Rule" id="MF_01342"/>
    </source>
</evidence>
<evidence type="ECO:0000305" key="2"/>
<feature type="chain" id="PRO_0000062146" description="Large ribosomal subunit protein uL16">
    <location>
        <begin position="1"/>
        <end position="137"/>
    </location>
</feature>
<gene>
    <name evidence="1" type="primary">rplP</name>
    <name type="ordered locus">MSC_0738</name>
</gene>